<protein>
    <recommendedName>
        <fullName>Toxin YjjJ</fullName>
    </recommendedName>
    <alternativeName>
        <fullName>Putative DNA-binding transcriptional regulator YjjJ</fullName>
    </alternativeName>
    <alternativeName>
        <fullName>Putative serine/threonine kinase toxin YjjJ</fullName>
        <ecNumber>2.-.-.-</ecNumber>
    </alternativeName>
</protein>
<gene>
    <name type="primary">yjjJ</name>
    <name type="ordered locus">b4385</name>
    <name type="ordered locus">JW4348</name>
</gene>
<sequence>MSELTDLLLQGPRSAPELRQRLAISQATFSRLVAREDRVIRFGKARATRYALLRPYRGIERIPVWRVDDTGKAHKFADIRLCWPQGSCLVTGADGDEQWFDGLPWYLTDLRPQGFLGRAWGRKLAAQLNLTDDIRLWQEEDVLYALTVFNGEYTGGWLVGEGNYQRWITAQHPAEIPLDQKLTHYEQLASDALAGEIVGSSAGGEQPKFTYYAQTPSGNKHVLVKFTVPQQTAVSQRWGDLLIAESIAAQILRDGGIHAIESTVLVTSNRQVFLEAERFDCKGNDGRLPIVSLEAVQSEFISSPGSWPQAMRRLCEQQLVTHQSVAQTEVIWAFGRLIANSDMHAGNLSFYLSEPPFALTPVYDMLPMVYAPNSAGMLRDAAIEVKFDLNVSKSAWLTAIPLAQQFWQTVARDPRISEAFRHIAQEMPEKIRQIEEKVARMGG</sequence>
<dbReference type="EC" id="2.-.-.-"/>
<dbReference type="EMBL" id="U14003">
    <property type="protein sequence ID" value="AAA97281.1"/>
    <property type="molecule type" value="Genomic_DNA"/>
</dbReference>
<dbReference type="EMBL" id="U00096">
    <property type="protein sequence ID" value="AAC77338.1"/>
    <property type="molecule type" value="Genomic_DNA"/>
</dbReference>
<dbReference type="EMBL" id="AP009048">
    <property type="protein sequence ID" value="BAE78374.1"/>
    <property type="molecule type" value="Genomic_DNA"/>
</dbReference>
<dbReference type="EMBL" id="X05629">
    <property type="protein sequence ID" value="CAA29115.1"/>
    <property type="status" value="ALT_SEQ"/>
    <property type="molecule type" value="Genomic_DNA"/>
</dbReference>
<dbReference type="PIR" id="S56609">
    <property type="entry name" value="S56609"/>
</dbReference>
<dbReference type="RefSeq" id="NP_418802.1">
    <property type="nucleotide sequence ID" value="NC_000913.3"/>
</dbReference>
<dbReference type="RefSeq" id="WP_001293115.1">
    <property type="nucleotide sequence ID" value="NZ_LN832404.1"/>
</dbReference>
<dbReference type="BioGRID" id="4259320">
    <property type="interactions" value="73"/>
</dbReference>
<dbReference type="FunCoup" id="P39410">
    <property type="interactions" value="3"/>
</dbReference>
<dbReference type="IntAct" id="P39410">
    <property type="interactions" value="2"/>
</dbReference>
<dbReference type="STRING" id="511145.b4385"/>
<dbReference type="jPOST" id="P39410"/>
<dbReference type="PaxDb" id="511145-b4385"/>
<dbReference type="EnsemblBacteria" id="AAC77338">
    <property type="protein sequence ID" value="AAC77338"/>
    <property type="gene ID" value="b4385"/>
</dbReference>
<dbReference type="GeneID" id="944883"/>
<dbReference type="KEGG" id="ecj:JW4348"/>
<dbReference type="KEGG" id="eco:b4385"/>
<dbReference type="KEGG" id="ecoc:C3026_23695"/>
<dbReference type="PATRIC" id="fig|1411691.4.peg.2300"/>
<dbReference type="EchoBASE" id="EB2246"/>
<dbReference type="eggNOG" id="COG3550">
    <property type="taxonomic scope" value="Bacteria"/>
</dbReference>
<dbReference type="HOGENOM" id="CLU_050829_0_0_6"/>
<dbReference type="InParanoid" id="P39410"/>
<dbReference type="OMA" id="DLLVCEH"/>
<dbReference type="OrthoDB" id="8555656at2"/>
<dbReference type="BioCyc" id="EcoCyc:EG12342-MONOMER"/>
<dbReference type="PRO" id="PR:P39410"/>
<dbReference type="Proteomes" id="UP000000625">
    <property type="component" value="Chromosome"/>
</dbReference>
<dbReference type="GO" id="GO:0005829">
    <property type="term" value="C:cytosol"/>
    <property type="evidence" value="ECO:0000318"/>
    <property type="project" value="GO_Central"/>
</dbReference>
<dbReference type="GO" id="GO:0003677">
    <property type="term" value="F:DNA binding"/>
    <property type="evidence" value="ECO:0000314"/>
    <property type="project" value="EcoCyc"/>
</dbReference>
<dbReference type="GO" id="GO:0004674">
    <property type="term" value="F:protein serine/threonine kinase activity"/>
    <property type="evidence" value="ECO:0000318"/>
    <property type="project" value="GO_Central"/>
</dbReference>
<dbReference type="GO" id="GO:0090729">
    <property type="term" value="F:toxin activity"/>
    <property type="evidence" value="ECO:0007669"/>
    <property type="project" value="UniProtKB-KW"/>
</dbReference>
<dbReference type="InterPro" id="IPR012893">
    <property type="entry name" value="HipA-like_C"/>
</dbReference>
<dbReference type="InterPro" id="IPR052028">
    <property type="entry name" value="HipA_Ser/Thr_kinase"/>
</dbReference>
<dbReference type="NCBIfam" id="NF007297">
    <property type="entry name" value="PRK09775.1"/>
    <property type="match status" value="1"/>
</dbReference>
<dbReference type="PANTHER" id="PTHR37419">
    <property type="entry name" value="SERINE/THREONINE-PROTEIN KINASE TOXIN HIPA"/>
    <property type="match status" value="1"/>
</dbReference>
<dbReference type="PANTHER" id="PTHR37419:SF8">
    <property type="entry name" value="TOXIN YJJJ"/>
    <property type="match status" value="1"/>
</dbReference>
<dbReference type="Pfam" id="PF07804">
    <property type="entry name" value="HipA_C"/>
    <property type="match status" value="1"/>
</dbReference>
<organism>
    <name type="scientific">Escherichia coli (strain K12)</name>
    <dbReference type="NCBI Taxonomy" id="83333"/>
    <lineage>
        <taxon>Bacteria</taxon>
        <taxon>Pseudomonadati</taxon>
        <taxon>Pseudomonadota</taxon>
        <taxon>Gammaproteobacteria</taxon>
        <taxon>Enterobacterales</taxon>
        <taxon>Enterobacteriaceae</taxon>
        <taxon>Escherichia</taxon>
    </lineage>
</organism>
<name>YJJJ_ECOLI</name>
<proteinExistence type="evidence at protein level"/>
<reference key="1">
    <citation type="journal article" date="1995" name="Nucleic Acids Res.">
        <title>Analysis of the Escherichia coli genome VI: DNA sequence of the region from 92.8 through 100 minutes.</title>
        <authorList>
            <person name="Burland V.D."/>
            <person name="Plunkett G. III"/>
            <person name="Sofia H.J."/>
            <person name="Daniels D.L."/>
            <person name="Blattner F.R."/>
        </authorList>
    </citation>
    <scope>NUCLEOTIDE SEQUENCE [LARGE SCALE GENOMIC DNA]</scope>
    <source>
        <strain>K12 / MG1655 / ATCC 47076</strain>
    </source>
</reference>
<reference key="2">
    <citation type="journal article" date="1997" name="Science">
        <title>The complete genome sequence of Escherichia coli K-12.</title>
        <authorList>
            <person name="Blattner F.R."/>
            <person name="Plunkett G. III"/>
            <person name="Bloch C.A."/>
            <person name="Perna N.T."/>
            <person name="Burland V."/>
            <person name="Riley M."/>
            <person name="Collado-Vides J."/>
            <person name="Glasner J.D."/>
            <person name="Rode C.K."/>
            <person name="Mayhew G.F."/>
            <person name="Gregor J."/>
            <person name="Davis N.W."/>
            <person name="Kirkpatrick H.A."/>
            <person name="Goeden M.A."/>
            <person name="Rose D.J."/>
            <person name="Mau B."/>
            <person name="Shao Y."/>
        </authorList>
    </citation>
    <scope>NUCLEOTIDE SEQUENCE [LARGE SCALE GENOMIC DNA]</scope>
    <source>
        <strain>K12 / MG1655 / ATCC 47076</strain>
    </source>
</reference>
<reference key="3">
    <citation type="journal article" date="2006" name="Mol. Syst. Biol.">
        <title>Highly accurate genome sequences of Escherichia coli K-12 strains MG1655 and W3110.</title>
        <authorList>
            <person name="Hayashi K."/>
            <person name="Morooka N."/>
            <person name="Yamamoto Y."/>
            <person name="Fujita K."/>
            <person name="Isono K."/>
            <person name="Choi S."/>
            <person name="Ohtsubo E."/>
            <person name="Baba T."/>
            <person name="Wanner B.L."/>
            <person name="Mori H."/>
            <person name="Horiuchi T."/>
        </authorList>
    </citation>
    <scope>NUCLEOTIDE SEQUENCE [LARGE SCALE GENOMIC DNA]</scope>
    <source>
        <strain>K12 / W3110 / ATCC 27325 / DSM 5911</strain>
    </source>
</reference>
<reference key="4">
    <citation type="journal article" date="1987" name="Nucleic Acids Res.">
        <title>Analysis of the terminator region after the deoCABD operon of Escherichia coli K-12 using a new class of single copy number operon-fusion vectors.</title>
        <authorList>
            <person name="Larsen J.E.L."/>
            <person name="Albrechtsen B."/>
            <person name="Valentin-Hansen P."/>
        </authorList>
    </citation>
    <scope>NUCLEOTIDE SEQUENCE [GENOMIC DNA] OF 5-52</scope>
    <source>
        <strain>K12</strain>
    </source>
</reference>
<reference key="5">
    <citation type="journal article" date="2017" name="FEMS Microbiol. Lett.">
        <title>Characterization of YjjJ toxin of Escherichia coli.</title>
        <authorList>
            <person name="Maeda Y."/>
            <person name="Lin C.Y."/>
            <person name="Ishida Y."/>
            <person name="Inouye M."/>
            <person name="Yamaguchi Y."/>
            <person name="Phadtare S."/>
        </authorList>
    </citation>
    <scope>FUNCTION AS A TOXIN</scope>
    <scope>DNA-BINDING</scope>
    <source>
        <strain>B / BL21-DE3</strain>
    </source>
</reference>
<accession>P39410</accession>
<accession>Q2M5T2</accession>
<comment type="function">
    <text evidence="1 3">Toxic when overexpressed in E.coli, leading to long filamentous cells. The toxic effect is neutralized by non-cognate antitoxin HipB (PubMed:28430938). Does not seem to inhibit DNA, RNA or protein synthesis, and unlike paralogous toxin HipA its toxic activity is not counteracted by overexpression of GltX (PubMed:28430938). Binds DNA (PubMed:28430938). Might be a protein kinase (By similarity).</text>
</comment>
<comment type="similarity">
    <text evidence="4">Belongs to the HipA Ser/Thr kinase family.</text>
</comment>
<comment type="sequence caution" evidence="4">
    <conflict type="erroneous initiation">
        <sequence resource="EMBL-CDS" id="CAA29115"/>
    </conflict>
    <text>Truncated N-terminus.</text>
</comment>
<comment type="sequence caution" evidence="4">
    <conflict type="miscellaneous discrepancy">
        <sequence resource="EMBL-CDS" id="CAA29115"/>
    </conflict>
    <text>Contaminating sequence. Sequence of unknown origin in the C-terminal part.</text>
</comment>
<feature type="chain" id="PRO_0000169809" description="Toxin YjjJ">
    <location>
        <begin position="1"/>
        <end position="443"/>
    </location>
</feature>
<feature type="active site" description="Proton acceptor" evidence="2">
    <location>
        <position position="342"/>
    </location>
</feature>
<evidence type="ECO:0000250" key="1">
    <source>
        <dbReference type="UniProtKB" id="P23874"/>
    </source>
</evidence>
<evidence type="ECO:0000255" key="2"/>
<evidence type="ECO:0000269" key="3">
    <source>
    </source>
</evidence>
<evidence type="ECO:0000305" key="4"/>
<keyword id="KW-0238">DNA-binding</keyword>
<keyword id="KW-0418">Kinase</keyword>
<keyword id="KW-1185">Reference proteome</keyword>
<keyword id="KW-0800">Toxin</keyword>
<keyword id="KW-0808">Transferase</keyword>